<protein>
    <recommendedName>
        <fullName>Hydroxymethylpyrimidine/phosphomethylpyrimidine kinase</fullName>
        <ecNumber evidence="2">2.7.1.49</ecNumber>
        <ecNumber evidence="2">2.7.4.7</ecNumber>
    </recommendedName>
    <alternativeName>
        <fullName>Hydroxymethylpyrimidine kinase</fullName>
        <shortName>HMP kinase</shortName>
    </alternativeName>
    <alternativeName>
        <fullName>Hydroxymethylpyrimidine phosphate kinase</fullName>
        <shortName>HMP-P kinase</shortName>
        <shortName>HMP-phosphate kinase</shortName>
        <shortName>HMPP kinase</shortName>
    </alternativeName>
</protein>
<dbReference type="EC" id="2.7.1.49" evidence="2"/>
<dbReference type="EC" id="2.7.4.7" evidence="2"/>
<dbReference type="EMBL" id="D84200">
    <property type="protein sequence ID" value="BAA76742.1"/>
    <property type="molecule type" value="Genomic_DNA"/>
</dbReference>
<dbReference type="EMBL" id="U00096">
    <property type="protein sequence ID" value="AAC75164.1"/>
    <property type="molecule type" value="Genomic_DNA"/>
</dbReference>
<dbReference type="EMBL" id="AP009048">
    <property type="protein sequence ID" value="BAA15971.1"/>
    <property type="molecule type" value="Genomic_DNA"/>
</dbReference>
<dbReference type="PIR" id="F64977">
    <property type="entry name" value="F64977"/>
</dbReference>
<dbReference type="RefSeq" id="NP_416606.1">
    <property type="nucleotide sequence ID" value="NC_000913.3"/>
</dbReference>
<dbReference type="RefSeq" id="WP_000822274.1">
    <property type="nucleotide sequence ID" value="NZ_STEB01000002.1"/>
</dbReference>
<dbReference type="SMR" id="P76422"/>
<dbReference type="BioGRID" id="4261536">
    <property type="interactions" value="15"/>
</dbReference>
<dbReference type="DIP" id="DIP-6867N"/>
<dbReference type="FunCoup" id="P76422">
    <property type="interactions" value="712"/>
</dbReference>
<dbReference type="IntAct" id="P76422">
    <property type="interactions" value="7"/>
</dbReference>
<dbReference type="STRING" id="511145.b2103"/>
<dbReference type="jPOST" id="P76422"/>
<dbReference type="PaxDb" id="511145-b2103"/>
<dbReference type="EnsemblBacteria" id="AAC75164">
    <property type="protein sequence ID" value="AAC75164"/>
    <property type="gene ID" value="b2103"/>
</dbReference>
<dbReference type="GeneID" id="93775091"/>
<dbReference type="GeneID" id="946459"/>
<dbReference type="KEGG" id="ecj:JW2090"/>
<dbReference type="KEGG" id="eco:b2103"/>
<dbReference type="KEGG" id="ecoc:C3026_11800"/>
<dbReference type="PATRIC" id="fig|1411691.4.peg.144"/>
<dbReference type="EchoBASE" id="EB3821"/>
<dbReference type="eggNOG" id="COG0351">
    <property type="taxonomic scope" value="Bacteria"/>
</dbReference>
<dbReference type="HOGENOM" id="CLU_020520_0_1_6"/>
<dbReference type="InParanoid" id="P76422"/>
<dbReference type="OMA" id="NRHTHGT"/>
<dbReference type="OrthoDB" id="9810880at2"/>
<dbReference type="PhylomeDB" id="P76422"/>
<dbReference type="BioCyc" id="EcoCyc:HMP-P-KIN-MONOMER"/>
<dbReference type="BioCyc" id="MetaCyc:HMP-P-KIN-MONOMER"/>
<dbReference type="BRENDA" id="2.7.1.49">
    <property type="organism ID" value="2026"/>
</dbReference>
<dbReference type="BRENDA" id="2.7.4.7">
    <property type="organism ID" value="2026"/>
</dbReference>
<dbReference type="UniPathway" id="UPA00060">
    <property type="reaction ID" value="UER00137"/>
</dbReference>
<dbReference type="UniPathway" id="UPA00060">
    <property type="reaction ID" value="UER00138"/>
</dbReference>
<dbReference type="PRO" id="PR:P76422"/>
<dbReference type="Proteomes" id="UP000000625">
    <property type="component" value="Chromosome"/>
</dbReference>
<dbReference type="GO" id="GO:0005829">
    <property type="term" value="C:cytosol"/>
    <property type="evidence" value="ECO:0000314"/>
    <property type="project" value="EcoCyc"/>
</dbReference>
<dbReference type="GO" id="GO:0005524">
    <property type="term" value="F:ATP binding"/>
    <property type="evidence" value="ECO:0007669"/>
    <property type="project" value="UniProtKB-KW"/>
</dbReference>
<dbReference type="GO" id="GO:0008902">
    <property type="term" value="F:hydroxymethylpyrimidine kinase activity"/>
    <property type="evidence" value="ECO:0000314"/>
    <property type="project" value="EcoCyc"/>
</dbReference>
<dbReference type="GO" id="GO:0008972">
    <property type="term" value="F:phosphomethylpyrimidine kinase activity"/>
    <property type="evidence" value="ECO:0000314"/>
    <property type="project" value="EcoCyc"/>
</dbReference>
<dbReference type="GO" id="GO:0009228">
    <property type="term" value="P:thiamine biosynthetic process"/>
    <property type="evidence" value="ECO:0000318"/>
    <property type="project" value="GO_Central"/>
</dbReference>
<dbReference type="GO" id="GO:0009229">
    <property type="term" value="P:thiamine diphosphate biosynthetic process"/>
    <property type="evidence" value="ECO:0000315"/>
    <property type="project" value="EcoCyc"/>
</dbReference>
<dbReference type="GO" id="GO:0036172">
    <property type="term" value="P:thiamine salvage"/>
    <property type="evidence" value="ECO:0000316"/>
    <property type="project" value="EcoCyc"/>
</dbReference>
<dbReference type="CDD" id="cd01169">
    <property type="entry name" value="HMPP_kinase"/>
    <property type="match status" value="1"/>
</dbReference>
<dbReference type="FunFam" id="3.40.1190.20:FF:000003">
    <property type="entry name" value="Phosphomethylpyrimidine kinase ThiD"/>
    <property type="match status" value="1"/>
</dbReference>
<dbReference type="Gene3D" id="3.40.1190.20">
    <property type="match status" value="1"/>
</dbReference>
<dbReference type="InterPro" id="IPR004399">
    <property type="entry name" value="HMP/HMP-P_kinase_dom"/>
</dbReference>
<dbReference type="InterPro" id="IPR013749">
    <property type="entry name" value="PM/HMP-P_kinase-1"/>
</dbReference>
<dbReference type="InterPro" id="IPR029056">
    <property type="entry name" value="Ribokinase-like"/>
</dbReference>
<dbReference type="NCBIfam" id="TIGR00097">
    <property type="entry name" value="HMP-P_kinase"/>
    <property type="match status" value="1"/>
</dbReference>
<dbReference type="PANTHER" id="PTHR20858:SF17">
    <property type="entry name" value="HYDROXYMETHYLPYRIMIDINE_PHOSPHOMETHYLPYRIMIDINE KINASE THI20-RELATED"/>
    <property type="match status" value="1"/>
</dbReference>
<dbReference type="PANTHER" id="PTHR20858">
    <property type="entry name" value="PHOSPHOMETHYLPYRIMIDINE KINASE"/>
    <property type="match status" value="1"/>
</dbReference>
<dbReference type="Pfam" id="PF08543">
    <property type="entry name" value="Phos_pyr_kin"/>
    <property type="match status" value="1"/>
</dbReference>
<dbReference type="SUPFAM" id="SSF53613">
    <property type="entry name" value="Ribokinase-like"/>
    <property type="match status" value="1"/>
</dbReference>
<evidence type="ECO:0000250" key="1"/>
<evidence type="ECO:0000269" key="2">
    <source>
    </source>
</evidence>
<evidence type="ECO:0000305" key="3"/>
<keyword id="KW-0067">ATP-binding</keyword>
<keyword id="KW-0903">Direct protein sequencing</keyword>
<keyword id="KW-0418">Kinase</keyword>
<keyword id="KW-0547">Nucleotide-binding</keyword>
<keyword id="KW-1185">Reference proteome</keyword>
<keyword id="KW-0784">Thiamine biosynthesis</keyword>
<keyword id="KW-0808">Transferase</keyword>
<proteinExistence type="evidence at protein level"/>
<feature type="chain" id="PRO_0000192018" description="Hydroxymethylpyrimidine/phosphomethylpyrimidine kinase">
    <location>
        <begin position="1"/>
        <end position="266"/>
    </location>
</feature>
<feature type="binding site" evidence="1">
    <location>
        <position position="44"/>
    </location>
    <ligand>
        <name>4-amino-5-hydroxymethyl-2-methylpyrimidine</name>
        <dbReference type="ChEBI" id="CHEBI:16892"/>
    </ligand>
</feature>
<name>THID_ECOLI</name>
<reference key="1">
    <citation type="journal article" date="1999" name="Microbiology">
        <title>Cloning and characterization of the thiD/J gene of Escherichia coli encoding a thiamin-synthesizing bifunctional enzyme, hydroxymethylpyrimidine kinase/phosphomethylpyrimidine kinase.</title>
        <authorList>
            <person name="Mizote T."/>
            <person name="Tsuda M."/>
            <person name="Smith D.D.S."/>
            <person name="Nakayama H."/>
            <person name="Nakazawa T."/>
        </authorList>
    </citation>
    <scope>NUCLEOTIDE SEQUENCE [GENOMIC DNA]</scope>
    <scope>PROTEIN SEQUENCE OF 1-10</scope>
    <scope>FUNCTION</scope>
    <scope>CATALYTIC ACTIVITY</scope>
    <scope>SUBUNIT</scope>
    <source>
        <strain>K12</strain>
    </source>
</reference>
<reference key="2">
    <citation type="journal article" date="1996" name="DNA Res.">
        <title>A 460-kb DNA sequence of the Escherichia coli K-12 genome corresponding to the 40.1-50.0 min region on the linkage map.</title>
        <authorList>
            <person name="Itoh T."/>
            <person name="Aiba H."/>
            <person name="Baba T."/>
            <person name="Fujita K."/>
            <person name="Hayashi K."/>
            <person name="Inada T."/>
            <person name="Isono K."/>
            <person name="Kasai H."/>
            <person name="Kimura S."/>
            <person name="Kitakawa M."/>
            <person name="Kitagawa M."/>
            <person name="Makino K."/>
            <person name="Miki T."/>
            <person name="Mizobuchi K."/>
            <person name="Mori H."/>
            <person name="Mori T."/>
            <person name="Motomura K."/>
            <person name="Nakade S."/>
            <person name="Nakamura Y."/>
            <person name="Nashimoto H."/>
            <person name="Nishio Y."/>
            <person name="Oshima T."/>
            <person name="Saito N."/>
            <person name="Sampei G."/>
            <person name="Seki Y."/>
            <person name="Sivasundaram S."/>
            <person name="Tagami H."/>
            <person name="Takeda J."/>
            <person name="Takemoto K."/>
            <person name="Wada C."/>
            <person name="Yamamoto Y."/>
            <person name="Horiuchi T."/>
        </authorList>
    </citation>
    <scope>NUCLEOTIDE SEQUENCE [LARGE SCALE GENOMIC DNA]</scope>
    <source>
        <strain>K12 / W3110 / ATCC 27325 / DSM 5911</strain>
    </source>
</reference>
<reference key="3">
    <citation type="journal article" date="1997" name="Science">
        <title>The complete genome sequence of Escherichia coli K-12.</title>
        <authorList>
            <person name="Blattner F.R."/>
            <person name="Plunkett G. III"/>
            <person name="Bloch C.A."/>
            <person name="Perna N.T."/>
            <person name="Burland V."/>
            <person name="Riley M."/>
            <person name="Collado-Vides J."/>
            <person name="Glasner J.D."/>
            <person name="Rode C.K."/>
            <person name="Mayhew G.F."/>
            <person name="Gregor J."/>
            <person name="Davis N.W."/>
            <person name="Kirkpatrick H.A."/>
            <person name="Goeden M.A."/>
            <person name="Rose D.J."/>
            <person name="Mau B."/>
            <person name="Shao Y."/>
        </authorList>
    </citation>
    <scope>NUCLEOTIDE SEQUENCE [LARGE SCALE GENOMIC DNA]</scope>
    <source>
        <strain>K12 / MG1655 / ATCC 47076</strain>
    </source>
</reference>
<reference key="4">
    <citation type="journal article" date="2006" name="Mol. Syst. Biol.">
        <title>Highly accurate genome sequences of Escherichia coli K-12 strains MG1655 and W3110.</title>
        <authorList>
            <person name="Hayashi K."/>
            <person name="Morooka N."/>
            <person name="Yamamoto Y."/>
            <person name="Fujita K."/>
            <person name="Isono K."/>
            <person name="Choi S."/>
            <person name="Ohtsubo E."/>
            <person name="Baba T."/>
            <person name="Wanner B.L."/>
            <person name="Mori H."/>
            <person name="Horiuchi T."/>
        </authorList>
    </citation>
    <scope>NUCLEOTIDE SEQUENCE [LARGE SCALE GENOMIC DNA]</scope>
    <source>
        <strain>K12 / W3110 / ATCC 27325 / DSM 5911</strain>
    </source>
</reference>
<accession>P76422</accession>
<organism>
    <name type="scientific">Escherichia coli (strain K12)</name>
    <dbReference type="NCBI Taxonomy" id="83333"/>
    <lineage>
        <taxon>Bacteria</taxon>
        <taxon>Pseudomonadati</taxon>
        <taxon>Pseudomonadota</taxon>
        <taxon>Gammaproteobacteria</taxon>
        <taxon>Enterobacterales</taxon>
        <taxon>Enterobacteriaceae</taxon>
        <taxon>Escherichia</taxon>
    </lineage>
</organism>
<sequence length="266" mass="28634">MKRINALTIAGTDPSGGAGIQADLKTFSALGAYGCSVITALVAQNTRGVQSVYRIEPDFVAAQLDSVFSDVRIDTTKIGMLAETDIVEAVAERLQRYQIQNVVLDTVMLAKSGDPLLSPSAVATLRSRLLPQVSLITPNLPEAAALLDAPHARTEQEMLEQGRSLLAMGCGAVLMKGGHLDDEQSPDWLFTREGEQRFTAPRIMTKNTHGTGCTLSAALAALRPRHTNWADTVQEAKSWLSSALAQADTLEVGHGIGPVHHFHAWW</sequence>
<comment type="function">
    <text evidence="2">Catalyzes the phosphorylation of hydroxymethylpyrimidine phosphate (HMP-P) to HMP-PP, and of HMP to HMP-P. Shows no activity with pyridoxal, pyridoxamine or pyridoxine.</text>
</comment>
<comment type="catalytic activity">
    <reaction evidence="2">
        <text>4-amino-5-hydroxymethyl-2-methylpyrimidine + ATP = 4-amino-2-methyl-5-(phosphooxymethyl)pyrimidine + ADP + H(+)</text>
        <dbReference type="Rhea" id="RHEA:23096"/>
        <dbReference type="ChEBI" id="CHEBI:15378"/>
        <dbReference type="ChEBI" id="CHEBI:16892"/>
        <dbReference type="ChEBI" id="CHEBI:30616"/>
        <dbReference type="ChEBI" id="CHEBI:58354"/>
        <dbReference type="ChEBI" id="CHEBI:456216"/>
        <dbReference type="EC" id="2.7.1.49"/>
    </reaction>
</comment>
<comment type="catalytic activity">
    <reaction evidence="2">
        <text>4-amino-2-methyl-5-(phosphooxymethyl)pyrimidine + ATP = 4-amino-2-methyl-5-(diphosphooxymethyl)pyrimidine + ADP</text>
        <dbReference type="Rhea" id="RHEA:19893"/>
        <dbReference type="ChEBI" id="CHEBI:30616"/>
        <dbReference type="ChEBI" id="CHEBI:57841"/>
        <dbReference type="ChEBI" id="CHEBI:58354"/>
        <dbReference type="ChEBI" id="CHEBI:456216"/>
        <dbReference type="EC" id="2.7.4.7"/>
    </reaction>
</comment>
<comment type="pathway">
    <text>Cofactor biosynthesis; thiamine diphosphate biosynthesis; 4-amino-2-methyl-5-diphosphomethylpyrimidine from 5-amino-1-(5-phospho-D-ribosyl)imidazole: step 2/3.</text>
</comment>
<comment type="pathway">
    <text>Cofactor biosynthesis; thiamine diphosphate biosynthesis; 4-amino-2-methyl-5-diphosphomethylpyrimidine from 5-amino-1-(5-phospho-D-ribosyl)imidazole: step 3/3.</text>
</comment>
<comment type="subunit">
    <text evidence="2">Monomer.</text>
</comment>
<comment type="similarity">
    <text evidence="3">Belongs to the ThiD family.</text>
</comment>
<gene>
    <name type="primary">thiD</name>
    <name type="synonym">thiJ</name>
    <name type="ordered locus">b2103</name>
    <name type="ordered locus">JW2090</name>
</gene>